<sequence>MIISASTDYRAAAQRKLPPFLFHYIDGGAYAEYTLRRNVEDLSAIALRQRVLKNMSELSLETRLFDETLAMPVALAPVGLTGMYARRGEVQAARAAAAKGVPFTLSTVSVCPIEEVAPAIDRPMWFQLYVLKDRGFMRNALERAKAAGVTTLVFTVDMPVPGARYRDAHSGMSGPYAAPRRILQAMTHPAWAWDVGLLGKPHDLGNISAYRGNPTGLEDYIGWLGANFDPSIAWKDLEWIREFWDGPMVIKGILDPEDARDAVKFGADGIVVSNHGGRQLDGVLSSARALPAIADAVKGELAILADSGIRTGLDVVRMIALGADSVLLGRAFVYALAAAGEAGVRNLLELIEKEMRVAMVLTGAKSIGEISADSLVRELGA</sequence>
<gene>
    <name evidence="1" type="primary">lldD</name>
    <name type="ordered locus">PA14_63090</name>
</gene>
<feature type="chain" id="PRO_1000068989" description="L-lactate dehydrogenase">
    <location>
        <begin position="1"/>
        <end position="381"/>
    </location>
</feature>
<feature type="domain" description="FMN hydroxy acid dehydrogenase" evidence="1">
    <location>
        <begin position="1"/>
        <end position="380"/>
    </location>
</feature>
<feature type="active site" description="Proton acceptor" evidence="1">
    <location>
        <position position="275"/>
    </location>
</feature>
<feature type="binding site" evidence="1">
    <location>
        <position position="24"/>
    </location>
    <ligand>
        <name>substrate</name>
    </ligand>
</feature>
<feature type="binding site" evidence="1">
    <location>
        <position position="106"/>
    </location>
    <ligand>
        <name>FMN</name>
        <dbReference type="ChEBI" id="CHEBI:58210"/>
    </ligand>
</feature>
<feature type="binding site" evidence="1">
    <location>
        <position position="127"/>
    </location>
    <ligand>
        <name>FMN</name>
        <dbReference type="ChEBI" id="CHEBI:58210"/>
    </ligand>
</feature>
<feature type="binding site" evidence="1">
    <location>
        <position position="129"/>
    </location>
    <ligand>
        <name>substrate</name>
    </ligand>
</feature>
<feature type="binding site" evidence="1">
    <location>
        <position position="155"/>
    </location>
    <ligand>
        <name>FMN</name>
        <dbReference type="ChEBI" id="CHEBI:58210"/>
    </ligand>
</feature>
<feature type="binding site" evidence="1">
    <location>
        <position position="164"/>
    </location>
    <ligand>
        <name>substrate</name>
    </ligand>
</feature>
<feature type="binding site" evidence="1">
    <location>
        <position position="251"/>
    </location>
    <ligand>
        <name>FMN</name>
        <dbReference type="ChEBI" id="CHEBI:58210"/>
    </ligand>
</feature>
<feature type="binding site" evidence="1">
    <location>
        <position position="278"/>
    </location>
    <ligand>
        <name>substrate</name>
    </ligand>
</feature>
<feature type="binding site" evidence="1">
    <location>
        <begin position="306"/>
        <end position="330"/>
    </location>
    <ligand>
        <name>FMN</name>
        <dbReference type="ChEBI" id="CHEBI:58210"/>
    </ligand>
</feature>
<dbReference type="EC" id="1.1.-.-" evidence="1"/>
<dbReference type="EMBL" id="CP000438">
    <property type="protein sequence ID" value="ABJ14154.1"/>
    <property type="molecule type" value="Genomic_DNA"/>
</dbReference>
<dbReference type="RefSeq" id="WP_004365390.1">
    <property type="nucleotide sequence ID" value="NZ_CP034244.1"/>
</dbReference>
<dbReference type="SMR" id="Q02FQ1"/>
<dbReference type="KEGG" id="pau:PA14_63090"/>
<dbReference type="PseudoCAP" id="PA14_63090"/>
<dbReference type="HOGENOM" id="CLU_020639_0_0_6"/>
<dbReference type="BioCyc" id="PAER208963:G1G74-5337-MONOMER"/>
<dbReference type="Proteomes" id="UP000000653">
    <property type="component" value="Chromosome"/>
</dbReference>
<dbReference type="GO" id="GO:0005886">
    <property type="term" value="C:plasma membrane"/>
    <property type="evidence" value="ECO:0007669"/>
    <property type="project" value="UniProtKB-SubCell"/>
</dbReference>
<dbReference type="GO" id="GO:0010181">
    <property type="term" value="F:FMN binding"/>
    <property type="evidence" value="ECO:0007669"/>
    <property type="project" value="InterPro"/>
</dbReference>
<dbReference type="GO" id="GO:0004459">
    <property type="term" value="F:L-lactate dehydrogenase activity"/>
    <property type="evidence" value="ECO:0007669"/>
    <property type="project" value="UniProtKB-UniRule"/>
</dbReference>
<dbReference type="GO" id="GO:0009060">
    <property type="term" value="P:aerobic respiration"/>
    <property type="evidence" value="ECO:0007669"/>
    <property type="project" value="TreeGrafter"/>
</dbReference>
<dbReference type="GO" id="GO:0006089">
    <property type="term" value="P:lactate metabolic process"/>
    <property type="evidence" value="ECO:0007669"/>
    <property type="project" value="UniProtKB-UniRule"/>
</dbReference>
<dbReference type="CDD" id="cd02809">
    <property type="entry name" value="alpha_hydroxyacid_oxid_FMN"/>
    <property type="match status" value="1"/>
</dbReference>
<dbReference type="FunFam" id="3.20.20.70:FF:000029">
    <property type="entry name" value="L-lactate dehydrogenase"/>
    <property type="match status" value="1"/>
</dbReference>
<dbReference type="Gene3D" id="3.20.20.70">
    <property type="entry name" value="Aldolase class I"/>
    <property type="match status" value="1"/>
</dbReference>
<dbReference type="HAMAP" id="MF_01559">
    <property type="entry name" value="L_lact_dehydr"/>
    <property type="match status" value="1"/>
</dbReference>
<dbReference type="InterPro" id="IPR013785">
    <property type="entry name" value="Aldolase_TIM"/>
</dbReference>
<dbReference type="InterPro" id="IPR012133">
    <property type="entry name" value="Alpha-hydoxy_acid_DH_FMN"/>
</dbReference>
<dbReference type="InterPro" id="IPR000262">
    <property type="entry name" value="FMN-dep_DH"/>
</dbReference>
<dbReference type="InterPro" id="IPR037396">
    <property type="entry name" value="FMN_HAD"/>
</dbReference>
<dbReference type="InterPro" id="IPR008259">
    <property type="entry name" value="FMN_hydac_DH_AS"/>
</dbReference>
<dbReference type="InterPro" id="IPR020920">
    <property type="entry name" value="LldD"/>
</dbReference>
<dbReference type="NCBIfam" id="NF033901">
    <property type="entry name" value="L_lactate_LldD"/>
    <property type="match status" value="1"/>
</dbReference>
<dbReference type="NCBIfam" id="NF008398">
    <property type="entry name" value="PRK11197.1"/>
    <property type="match status" value="1"/>
</dbReference>
<dbReference type="PANTHER" id="PTHR10578:SF85">
    <property type="entry name" value="L-LACTATE DEHYDROGENASE"/>
    <property type="match status" value="1"/>
</dbReference>
<dbReference type="PANTHER" id="PTHR10578">
    <property type="entry name" value="S -2-HYDROXY-ACID OXIDASE-RELATED"/>
    <property type="match status" value="1"/>
</dbReference>
<dbReference type="Pfam" id="PF01070">
    <property type="entry name" value="FMN_dh"/>
    <property type="match status" value="1"/>
</dbReference>
<dbReference type="PIRSF" id="PIRSF000138">
    <property type="entry name" value="Al-hdrx_acd_dh"/>
    <property type="match status" value="1"/>
</dbReference>
<dbReference type="SUPFAM" id="SSF51395">
    <property type="entry name" value="FMN-linked oxidoreductases"/>
    <property type="match status" value="1"/>
</dbReference>
<dbReference type="PROSITE" id="PS00557">
    <property type="entry name" value="FMN_HYDROXY_ACID_DH_1"/>
    <property type="match status" value="1"/>
</dbReference>
<dbReference type="PROSITE" id="PS51349">
    <property type="entry name" value="FMN_HYDROXY_ACID_DH_2"/>
    <property type="match status" value="1"/>
</dbReference>
<comment type="function">
    <text evidence="1">Catalyzes the conversion of L-lactate to pyruvate. Is coupled to the respiratory chain.</text>
</comment>
<comment type="catalytic activity">
    <reaction evidence="1">
        <text>(S)-lactate + A = pyruvate + AH2</text>
        <dbReference type="Rhea" id="RHEA:45816"/>
        <dbReference type="ChEBI" id="CHEBI:13193"/>
        <dbReference type="ChEBI" id="CHEBI:15361"/>
        <dbReference type="ChEBI" id="CHEBI:16651"/>
        <dbReference type="ChEBI" id="CHEBI:17499"/>
    </reaction>
</comment>
<comment type="cofactor">
    <cofactor evidence="1">
        <name>FMN</name>
        <dbReference type="ChEBI" id="CHEBI:58210"/>
    </cofactor>
</comment>
<comment type="subunit">
    <text evidence="1">Homotetramer.</text>
</comment>
<comment type="subcellular location">
    <subcellularLocation>
        <location evidence="1">Cell inner membrane</location>
        <topology evidence="1">Peripheral membrane protein</topology>
    </subcellularLocation>
</comment>
<comment type="similarity">
    <text evidence="1">Belongs to the FMN-dependent alpha-hydroxy acid dehydrogenase family.</text>
</comment>
<proteinExistence type="inferred from homology"/>
<keyword id="KW-0997">Cell inner membrane</keyword>
<keyword id="KW-1003">Cell membrane</keyword>
<keyword id="KW-0285">Flavoprotein</keyword>
<keyword id="KW-0288">FMN</keyword>
<keyword id="KW-0472">Membrane</keyword>
<keyword id="KW-0560">Oxidoreductase</keyword>
<reference key="1">
    <citation type="journal article" date="2006" name="Genome Biol.">
        <title>Genomic analysis reveals that Pseudomonas aeruginosa virulence is combinatorial.</title>
        <authorList>
            <person name="Lee D.G."/>
            <person name="Urbach J.M."/>
            <person name="Wu G."/>
            <person name="Liberati N.T."/>
            <person name="Feinbaum R.L."/>
            <person name="Miyata S."/>
            <person name="Diggins L.T."/>
            <person name="He J."/>
            <person name="Saucier M."/>
            <person name="Deziel E."/>
            <person name="Friedman L."/>
            <person name="Li L."/>
            <person name="Grills G."/>
            <person name="Montgomery K."/>
            <person name="Kucherlapati R."/>
            <person name="Rahme L.G."/>
            <person name="Ausubel F.M."/>
        </authorList>
    </citation>
    <scope>NUCLEOTIDE SEQUENCE [LARGE SCALE GENOMIC DNA]</scope>
    <source>
        <strain>UCBPP-PA14</strain>
    </source>
</reference>
<accession>Q02FQ1</accession>
<protein>
    <recommendedName>
        <fullName evidence="1">L-lactate dehydrogenase</fullName>
        <ecNumber evidence="1">1.1.-.-</ecNumber>
    </recommendedName>
</protein>
<organism>
    <name type="scientific">Pseudomonas aeruginosa (strain UCBPP-PA14)</name>
    <dbReference type="NCBI Taxonomy" id="208963"/>
    <lineage>
        <taxon>Bacteria</taxon>
        <taxon>Pseudomonadati</taxon>
        <taxon>Pseudomonadota</taxon>
        <taxon>Gammaproteobacteria</taxon>
        <taxon>Pseudomonadales</taxon>
        <taxon>Pseudomonadaceae</taxon>
        <taxon>Pseudomonas</taxon>
    </lineage>
</organism>
<evidence type="ECO:0000255" key="1">
    <source>
        <dbReference type="HAMAP-Rule" id="MF_01559"/>
    </source>
</evidence>
<name>LLDD_PSEAB</name>